<feature type="chain" id="PRO_0000389716" description="Acetyl-coenzyme A carboxylase carboxyl transferase subunit beta">
    <location>
        <begin position="1"/>
        <end position="279"/>
    </location>
</feature>
<feature type="domain" description="CoA carboxyltransferase N-terminal" evidence="2">
    <location>
        <begin position="23"/>
        <end position="279"/>
    </location>
</feature>
<feature type="zinc finger region" description="C4-type" evidence="1">
    <location>
        <begin position="27"/>
        <end position="49"/>
    </location>
</feature>
<feature type="binding site" evidence="1">
    <location>
        <position position="27"/>
    </location>
    <ligand>
        <name>Zn(2+)</name>
        <dbReference type="ChEBI" id="CHEBI:29105"/>
    </ligand>
</feature>
<feature type="binding site" evidence="1">
    <location>
        <position position="30"/>
    </location>
    <ligand>
        <name>Zn(2+)</name>
        <dbReference type="ChEBI" id="CHEBI:29105"/>
    </ligand>
</feature>
<feature type="binding site" evidence="1">
    <location>
        <position position="46"/>
    </location>
    <ligand>
        <name>Zn(2+)</name>
        <dbReference type="ChEBI" id="CHEBI:29105"/>
    </ligand>
</feature>
<feature type="binding site" evidence="1">
    <location>
        <position position="49"/>
    </location>
    <ligand>
        <name>Zn(2+)</name>
        <dbReference type="ChEBI" id="CHEBI:29105"/>
    </ligand>
</feature>
<protein>
    <recommendedName>
        <fullName evidence="1">Acetyl-coenzyme A carboxylase carboxyl transferase subunit beta</fullName>
        <shortName evidence="1">ACCase subunit beta</shortName>
        <shortName evidence="1">Acetyl-CoA carboxylase carboxyltransferase subunit beta</shortName>
        <ecNumber evidence="1">2.1.3.15</ecNumber>
    </recommendedName>
</protein>
<accession>A1BI17</accession>
<evidence type="ECO:0000255" key="1">
    <source>
        <dbReference type="HAMAP-Rule" id="MF_01395"/>
    </source>
</evidence>
<evidence type="ECO:0000255" key="2">
    <source>
        <dbReference type="PROSITE-ProRule" id="PRU01136"/>
    </source>
</evidence>
<keyword id="KW-0067">ATP-binding</keyword>
<keyword id="KW-0963">Cytoplasm</keyword>
<keyword id="KW-0275">Fatty acid biosynthesis</keyword>
<keyword id="KW-0276">Fatty acid metabolism</keyword>
<keyword id="KW-0444">Lipid biosynthesis</keyword>
<keyword id="KW-0443">Lipid metabolism</keyword>
<keyword id="KW-0479">Metal-binding</keyword>
<keyword id="KW-0547">Nucleotide-binding</keyword>
<keyword id="KW-1185">Reference proteome</keyword>
<keyword id="KW-0808">Transferase</keyword>
<keyword id="KW-0862">Zinc</keyword>
<keyword id="KW-0863">Zinc-finger</keyword>
<organism>
    <name type="scientific">Chlorobium phaeobacteroides (strain DSM 266 / SMG 266 / 2430)</name>
    <dbReference type="NCBI Taxonomy" id="290317"/>
    <lineage>
        <taxon>Bacteria</taxon>
        <taxon>Pseudomonadati</taxon>
        <taxon>Chlorobiota</taxon>
        <taxon>Chlorobiia</taxon>
        <taxon>Chlorobiales</taxon>
        <taxon>Chlorobiaceae</taxon>
        <taxon>Chlorobium/Pelodictyon group</taxon>
        <taxon>Chlorobium</taxon>
    </lineage>
</organism>
<reference key="1">
    <citation type="submission" date="2006-12" db="EMBL/GenBank/DDBJ databases">
        <title>Complete sequence of Chlorobium phaeobacteroides DSM 266.</title>
        <authorList>
            <consortium name="US DOE Joint Genome Institute"/>
            <person name="Copeland A."/>
            <person name="Lucas S."/>
            <person name="Lapidus A."/>
            <person name="Barry K."/>
            <person name="Detter J.C."/>
            <person name="Glavina del Rio T."/>
            <person name="Hammon N."/>
            <person name="Israni S."/>
            <person name="Pitluck S."/>
            <person name="Goltsman E."/>
            <person name="Schmutz J."/>
            <person name="Larimer F."/>
            <person name="Land M."/>
            <person name="Hauser L."/>
            <person name="Mikhailova N."/>
            <person name="Li T."/>
            <person name="Overmann J."/>
            <person name="Bryant D.A."/>
            <person name="Richardson P."/>
        </authorList>
    </citation>
    <scope>NUCLEOTIDE SEQUENCE [LARGE SCALE GENOMIC DNA]</scope>
    <source>
        <strain>DSM 266 / SMG 266 / 2430</strain>
    </source>
</reference>
<name>ACCD_CHLPD</name>
<comment type="function">
    <text evidence="1">Component of the acetyl coenzyme A carboxylase (ACC) complex. Biotin carboxylase (BC) catalyzes the carboxylation of biotin on its carrier protein (BCCP) and then the CO(2) group is transferred by the transcarboxylase to acetyl-CoA to form malonyl-CoA.</text>
</comment>
<comment type="catalytic activity">
    <reaction evidence="1">
        <text>N(6)-carboxybiotinyl-L-lysyl-[protein] + acetyl-CoA = N(6)-biotinyl-L-lysyl-[protein] + malonyl-CoA</text>
        <dbReference type="Rhea" id="RHEA:54728"/>
        <dbReference type="Rhea" id="RHEA-COMP:10505"/>
        <dbReference type="Rhea" id="RHEA-COMP:10506"/>
        <dbReference type="ChEBI" id="CHEBI:57288"/>
        <dbReference type="ChEBI" id="CHEBI:57384"/>
        <dbReference type="ChEBI" id="CHEBI:83144"/>
        <dbReference type="ChEBI" id="CHEBI:83145"/>
        <dbReference type="EC" id="2.1.3.15"/>
    </reaction>
</comment>
<comment type="cofactor">
    <cofactor evidence="1">
        <name>Zn(2+)</name>
        <dbReference type="ChEBI" id="CHEBI:29105"/>
    </cofactor>
    <text evidence="1">Binds 1 zinc ion per subunit.</text>
</comment>
<comment type="pathway">
    <text evidence="1">Lipid metabolism; malonyl-CoA biosynthesis; malonyl-CoA from acetyl-CoA: step 1/1.</text>
</comment>
<comment type="subunit">
    <text evidence="1">Acetyl-CoA carboxylase is a heterohexamer composed of biotin carboxyl carrier protein (AccB), biotin carboxylase (AccC) and two subunits each of ACCase subunit alpha (AccA) and ACCase subunit beta (AccD).</text>
</comment>
<comment type="subcellular location">
    <subcellularLocation>
        <location evidence="1">Cytoplasm</location>
    </subcellularLocation>
</comment>
<comment type="similarity">
    <text evidence="1">Belongs to the AccD/PCCB family.</text>
</comment>
<sequence>MVWFKRAKPAIRTTDRRDMPEGMWWKCDECGAMLHKKQLEDNFYTCSECGYHFRISPYKYFSLLFDGDKYQEFEDQLRSADPLGFTDTKKYLDRVHDIIEKSGKTEACRNAFGEADGRMLVVSAMDFGFIGGSMGSVVGEKIARAVDKAIDLNAPLLVISQSGGARMMEGAFSLMQMAKTAARLTRLSEKKLPFFSLMTDPTMGGITASFAMLGDVNISEPKALIGFAGPRVIRDTIKRDLPEGFQRAEFLLEHGFLDLIVHRRELKTQIVRLMTMLAP</sequence>
<gene>
    <name evidence="1" type="primary">accD</name>
    <name type="ordered locus">Cpha266_2032</name>
</gene>
<dbReference type="EC" id="2.1.3.15" evidence="1"/>
<dbReference type="EMBL" id="CP000492">
    <property type="protein sequence ID" value="ABL66044.1"/>
    <property type="molecule type" value="Genomic_DNA"/>
</dbReference>
<dbReference type="RefSeq" id="WP_011745848.1">
    <property type="nucleotide sequence ID" value="NC_008639.1"/>
</dbReference>
<dbReference type="SMR" id="A1BI17"/>
<dbReference type="STRING" id="290317.Cpha266_2032"/>
<dbReference type="KEGG" id="cph:Cpha266_2032"/>
<dbReference type="eggNOG" id="COG0777">
    <property type="taxonomic scope" value="Bacteria"/>
</dbReference>
<dbReference type="HOGENOM" id="CLU_015486_1_0_10"/>
<dbReference type="OrthoDB" id="9772975at2"/>
<dbReference type="UniPathway" id="UPA00655">
    <property type="reaction ID" value="UER00711"/>
</dbReference>
<dbReference type="Proteomes" id="UP000008701">
    <property type="component" value="Chromosome"/>
</dbReference>
<dbReference type="GO" id="GO:0009317">
    <property type="term" value="C:acetyl-CoA carboxylase complex"/>
    <property type="evidence" value="ECO:0007669"/>
    <property type="project" value="InterPro"/>
</dbReference>
<dbReference type="GO" id="GO:0003989">
    <property type="term" value="F:acetyl-CoA carboxylase activity"/>
    <property type="evidence" value="ECO:0007669"/>
    <property type="project" value="InterPro"/>
</dbReference>
<dbReference type="GO" id="GO:0005524">
    <property type="term" value="F:ATP binding"/>
    <property type="evidence" value="ECO:0007669"/>
    <property type="project" value="UniProtKB-KW"/>
</dbReference>
<dbReference type="GO" id="GO:0016743">
    <property type="term" value="F:carboxyl- or carbamoyltransferase activity"/>
    <property type="evidence" value="ECO:0007669"/>
    <property type="project" value="UniProtKB-UniRule"/>
</dbReference>
<dbReference type="GO" id="GO:0008270">
    <property type="term" value="F:zinc ion binding"/>
    <property type="evidence" value="ECO:0007669"/>
    <property type="project" value="UniProtKB-UniRule"/>
</dbReference>
<dbReference type="GO" id="GO:0006633">
    <property type="term" value="P:fatty acid biosynthetic process"/>
    <property type="evidence" value="ECO:0007669"/>
    <property type="project" value="UniProtKB-KW"/>
</dbReference>
<dbReference type="GO" id="GO:2001295">
    <property type="term" value="P:malonyl-CoA biosynthetic process"/>
    <property type="evidence" value="ECO:0007669"/>
    <property type="project" value="UniProtKB-UniRule"/>
</dbReference>
<dbReference type="Gene3D" id="3.90.226.10">
    <property type="entry name" value="2-enoyl-CoA Hydratase, Chain A, domain 1"/>
    <property type="match status" value="1"/>
</dbReference>
<dbReference type="HAMAP" id="MF_01395">
    <property type="entry name" value="AcetylCoA_CT_beta"/>
    <property type="match status" value="1"/>
</dbReference>
<dbReference type="InterPro" id="IPR034733">
    <property type="entry name" value="AcCoA_carboxyl_beta"/>
</dbReference>
<dbReference type="InterPro" id="IPR000438">
    <property type="entry name" value="Acetyl_CoA_COase_Trfase_b_su"/>
</dbReference>
<dbReference type="InterPro" id="IPR029045">
    <property type="entry name" value="ClpP/crotonase-like_dom_sf"/>
</dbReference>
<dbReference type="InterPro" id="IPR011762">
    <property type="entry name" value="COA_CT_N"/>
</dbReference>
<dbReference type="InterPro" id="IPR041010">
    <property type="entry name" value="Znf-ACC"/>
</dbReference>
<dbReference type="NCBIfam" id="TIGR00515">
    <property type="entry name" value="accD"/>
    <property type="match status" value="1"/>
</dbReference>
<dbReference type="PANTHER" id="PTHR42995">
    <property type="entry name" value="ACETYL-COENZYME A CARBOXYLASE CARBOXYL TRANSFERASE SUBUNIT BETA, CHLOROPLASTIC"/>
    <property type="match status" value="1"/>
</dbReference>
<dbReference type="PANTHER" id="PTHR42995:SF5">
    <property type="entry name" value="ACETYL-COENZYME A CARBOXYLASE CARBOXYL TRANSFERASE SUBUNIT BETA, CHLOROPLASTIC"/>
    <property type="match status" value="1"/>
</dbReference>
<dbReference type="Pfam" id="PF01039">
    <property type="entry name" value="Carboxyl_trans"/>
    <property type="match status" value="1"/>
</dbReference>
<dbReference type="Pfam" id="PF17848">
    <property type="entry name" value="Zn_ribbon_ACC"/>
    <property type="match status" value="1"/>
</dbReference>
<dbReference type="PRINTS" id="PR01070">
    <property type="entry name" value="ACCCTRFRASEB"/>
</dbReference>
<dbReference type="SUPFAM" id="SSF52096">
    <property type="entry name" value="ClpP/crotonase"/>
    <property type="match status" value="1"/>
</dbReference>
<dbReference type="PROSITE" id="PS50980">
    <property type="entry name" value="COA_CT_NTER"/>
    <property type="match status" value="1"/>
</dbReference>
<proteinExistence type="inferred from homology"/>